<comment type="function">
    <text evidence="3">Odorant receptor.</text>
</comment>
<comment type="subcellular location">
    <subcellularLocation>
        <location>Cell membrane</location>
        <topology>Multi-pass membrane protein</topology>
    </subcellularLocation>
</comment>
<comment type="similarity">
    <text evidence="2">Belongs to the G-protein coupled receptor 1 family.</text>
</comment>
<comment type="online information" name="Human Olfactory Receptor Data Exploratorium (HORDE)">
    <link uri="http://genome.weizmann.ac.il/horde/card/index/symbol:OR8K3"/>
</comment>
<name>OR8K3_HUMAN</name>
<feature type="chain" id="PRO_0000150672" description="Olfactory receptor 8K3">
    <location>
        <begin position="1"/>
        <end position="312"/>
    </location>
</feature>
<feature type="topological domain" description="Extracellular" evidence="1">
    <location>
        <begin position="1"/>
        <end position="25"/>
    </location>
</feature>
<feature type="transmembrane region" description="Helical; Name=1" evidence="1">
    <location>
        <begin position="26"/>
        <end position="46"/>
    </location>
</feature>
<feature type="topological domain" description="Cytoplasmic" evidence="1">
    <location>
        <begin position="47"/>
        <end position="54"/>
    </location>
</feature>
<feature type="transmembrane region" description="Helical; Name=2" evidence="1">
    <location>
        <begin position="55"/>
        <end position="75"/>
    </location>
</feature>
<feature type="topological domain" description="Extracellular" evidence="1">
    <location>
        <begin position="76"/>
        <end position="99"/>
    </location>
</feature>
<feature type="transmembrane region" description="Helical; Name=3" evidence="1">
    <location>
        <begin position="100"/>
        <end position="120"/>
    </location>
</feature>
<feature type="topological domain" description="Cytoplasmic" evidence="1">
    <location>
        <begin position="121"/>
        <end position="139"/>
    </location>
</feature>
<feature type="transmembrane region" description="Helical; Name=4" evidence="1">
    <location>
        <begin position="140"/>
        <end position="160"/>
    </location>
</feature>
<feature type="topological domain" description="Extracellular" evidence="1">
    <location>
        <begin position="161"/>
        <end position="197"/>
    </location>
</feature>
<feature type="transmembrane region" description="Helical; Name=5" evidence="1">
    <location>
        <begin position="198"/>
        <end position="217"/>
    </location>
</feature>
<feature type="topological domain" description="Cytoplasmic" evidence="1">
    <location>
        <begin position="218"/>
        <end position="236"/>
    </location>
</feature>
<feature type="transmembrane region" description="Helical; Name=6" evidence="1">
    <location>
        <begin position="237"/>
        <end position="257"/>
    </location>
</feature>
<feature type="topological domain" description="Extracellular" evidence="1">
    <location>
        <begin position="258"/>
        <end position="270"/>
    </location>
</feature>
<feature type="transmembrane region" description="Helical; Name=7" evidence="1">
    <location>
        <begin position="271"/>
        <end position="291"/>
    </location>
</feature>
<feature type="topological domain" description="Cytoplasmic" evidence="1">
    <location>
        <begin position="292"/>
        <end position="312"/>
    </location>
</feature>
<feature type="glycosylation site" description="N-linked (GlcNAc...) asparagine" evidence="1">
    <location>
        <position position="5"/>
    </location>
</feature>
<feature type="disulfide bond" evidence="2">
    <location>
        <begin position="97"/>
        <end position="189"/>
    </location>
</feature>
<feature type="sequence variant" id="VAR_024123" description="In dbSNP:rs960193.">
    <original>L</original>
    <variation>R</variation>
    <location>
        <position position="122"/>
    </location>
</feature>
<feature type="sequence variant" id="VAR_034273" description="In dbSNP:rs12291617.">
    <original>V</original>
    <variation>I</variation>
    <location>
        <position position="173"/>
    </location>
</feature>
<feature type="sequence variant" id="VAR_034274" description="In dbSNP:rs17150317.">
    <original>I</original>
    <variation>M</variation>
    <location>
        <position position="275"/>
    </location>
</feature>
<accession>Q8NH51</accession>
<accession>Q6IFC4</accession>
<dbReference type="EMBL" id="AB065541">
    <property type="protein sequence ID" value="BAC05786.1"/>
    <property type="molecule type" value="Genomic_DNA"/>
</dbReference>
<dbReference type="EMBL" id="BK004338">
    <property type="protein sequence ID" value="DAA04736.1"/>
    <property type="molecule type" value="Genomic_DNA"/>
</dbReference>
<dbReference type="RefSeq" id="NP_001005202.1">
    <property type="nucleotide sequence ID" value="NM_001005202.2"/>
</dbReference>
<dbReference type="SMR" id="Q8NH51"/>
<dbReference type="FunCoup" id="Q8NH51">
    <property type="interactions" value="463"/>
</dbReference>
<dbReference type="STRING" id="9606.ENSP00000493271"/>
<dbReference type="GlyCosmos" id="Q8NH51">
    <property type="glycosylation" value="1 site, No reported glycans"/>
</dbReference>
<dbReference type="GlyGen" id="Q8NH51">
    <property type="glycosylation" value="1 site"/>
</dbReference>
<dbReference type="iPTMnet" id="Q8NH51"/>
<dbReference type="PhosphoSitePlus" id="Q8NH51"/>
<dbReference type="BioMuta" id="OR8K3"/>
<dbReference type="DMDM" id="38372810"/>
<dbReference type="MassIVE" id="Q8NH51"/>
<dbReference type="PaxDb" id="9606-ENSP00000323555"/>
<dbReference type="ProteomicsDB" id="73660"/>
<dbReference type="Antibodypedia" id="78716">
    <property type="antibodies" value="70 antibodies from 18 providers"/>
</dbReference>
<dbReference type="DNASU" id="219473"/>
<dbReference type="Ensembl" id="ENST00000573400.1">
    <property type="protein sequence ID" value="ENSP00000460880.1"/>
    <property type="gene ID" value="ENSG00000262755.1"/>
</dbReference>
<dbReference type="Ensembl" id="ENST00000641662.1">
    <property type="protein sequence ID" value="ENSP00000493271.1"/>
    <property type="gene ID" value="ENSG00000280314.4"/>
</dbReference>
<dbReference type="Ensembl" id="ENST00000641689.1">
    <property type="protein sequence ID" value="ENSP00000493440.1"/>
    <property type="gene ID" value="ENSG00000280314.4"/>
</dbReference>
<dbReference type="Ensembl" id="ENST00000709019.1">
    <property type="protein sequence ID" value="ENSP00000517464.1"/>
    <property type="gene ID" value="ENSG00000291865.1"/>
</dbReference>
<dbReference type="Ensembl" id="ENST00000709020.1">
    <property type="protein sequence ID" value="ENSP00000517465.1"/>
    <property type="gene ID" value="ENSG00000291865.1"/>
</dbReference>
<dbReference type="GeneID" id="219473"/>
<dbReference type="KEGG" id="hsa:219473"/>
<dbReference type="MANE-Select" id="ENST00000641662.1">
    <property type="protein sequence ID" value="ENSP00000493271.1"/>
    <property type="RefSeq nucleotide sequence ID" value="NM_001005202.2"/>
    <property type="RefSeq protein sequence ID" value="NP_001005202.1"/>
</dbReference>
<dbReference type="UCSC" id="uc010rjf.2">
    <property type="organism name" value="human"/>
</dbReference>
<dbReference type="AGR" id="HGNC:15313"/>
<dbReference type="CTD" id="219473"/>
<dbReference type="DisGeNET" id="219473"/>
<dbReference type="GeneCards" id="OR8K3"/>
<dbReference type="HGNC" id="HGNC:15313">
    <property type="gene designation" value="OR8K3"/>
</dbReference>
<dbReference type="HPA" id="ENSG00000280314">
    <property type="expression patterns" value="Not detected"/>
</dbReference>
<dbReference type="MalaCards" id="OR8K3"/>
<dbReference type="neXtProt" id="NX_Q8NH51"/>
<dbReference type="PharmGKB" id="PA32777"/>
<dbReference type="VEuPathDB" id="HostDB:ENSG00000280314"/>
<dbReference type="eggNOG" id="ENOG502SHX8">
    <property type="taxonomic scope" value="Eukaryota"/>
</dbReference>
<dbReference type="GeneTree" id="ENSGT00950000182718"/>
<dbReference type="HOGENOM" id="CLU_012526_1_0_1"/>
<dbReference type="InParanoid" id="Q8NH51"/>
<dbReference type="OMA" id="RMWKKIC"/>
<dbReference type="OrthoDB" id="9011197at2759"/>
<dbReference type="PAN-GO" id="Q8NH51">
    <property type="GO annotations" value="4 GO annotations based on evolutionary models"/>
</dbReference>
<dbReference type="PhylomeDB" id="Q8NH51"/>
<dbReference type="TreeFam" id="TF352749"/>
<dbReference type="PathwayCommons" id="Q8NH51"/>
<dbReference type="Reactome" id="R-HSA-381753">
    <property type="pathway name" value="Olfactory Signaling Pathway"/>
</dbReference>
<dbReference type="Reactome" id="R-HSA-9752946">
    <property type="pathway name" value="Expression and translocation of olfactory receptors"/>
</dbReference>
<dbReference type="BioGRID-ORCS" id="219473">
    <property type="hits" value="9 hits in 736 CRISPR screens"/>
</dbReference>
<dbReference type="GeneWiki" id="OR8K3"/>
<dbReference type="GenomeRNAi" id="219473"/>
<dbReference type="Pharos" id="Q8NH51">
    <property type="development level" value="Tdark"/>
</dbReference>
<dbReference type="PRO" id="PR:Q8NH51"/>
<dbReference type="Proteomes" id="UP000005640">
    <property type="component" value="Chromosome 11"/>
</dbReference>
<dbReference type="RNAct" id="Q8NH51">
    <property type="molecule type" value="protein"/>
</dbReference>
<dbReference type="GO" id="GO:0005886">
    <property type="term" value="C:plasma membrane"/>
    <property type="evidence" value="ECO:0000304"/>
    <property type="project" value="Reactome"/>
</dbReference>
<dbReference type="GO" id="GO:0004930">
    <property type="term" value="F:G protein-coupled receptor activity"/>
    <property type="evidence" value="ECO:0007669"/>
    <property type="project" value="UniProtKB-KW"/>
</dbReference>
<dbReference type="GO" id="GO:0004984">
    <property type="term" value="F:olfactory receptor activity"/>
    <property type="evidence" value="ECO:0007669"/>
    <property type="project" value="InterPro"/>
</dbReference>
<dbReference type="CDD" id="cd15413">
    <property type="entry name" value="7tmA_OR8K-like"/>
    <property type="match status" value="1"/>
</dbReference>
<dbReference type="FunFam" id="1.10.1220.70:FF:000001">
    <property type="entry name" value="Olfactory receptor"/>
    <property type="match status" value="1"/>
</dbReference>
<dbReference type="FunFam" id="1.20.1070.10:FF:000003">
    <property type="entry name" value="Olfactory receptor"/>
    <property type="match status" value="1"/>
</dbReference>
<dbReference type="Gene3D" id="1.20.1070.10">
    <property type="entry name" value="Rhodopsin 7-helix transmembrane proteins"/>
    <property type="match status" value="1"/>
</dbReference>
<dbReference type="InterPro" id="IPR000276">
    <property type="entry name" value="GPCR_Rhodpsn"/>
</dbReference>
<dbReference type="InterPro" id="IPR017452">
    <property type="entry name" value="GPCR_Rhodpsn_7TM"/>
</dbReference>
<dbReference type="InterPro" id="IPR000725">
    <property type="entry name" value="Olfact_rcpt"/>
</dbReference>
<dbReference type="PANTHER" id="PTHR48018">
    <property type="entry name" value="OLFACTORY RECEPTOR"/>
    <property type="match status" value="1"/>
</dbReference>
<dbReference type="Pfam" id="PF13853">
    <property type="entry name" value="7tm_4"/>
    <property type="match status" value="1"/>
</dbReference>
<dbReference type="PRINTS" id="PR00237">
    <property type="entry name" value="GPCRRHODOPSN"/>
</dbReference>
<dbReference type="PRINTS" id="PR00245">
    <property type="entry name" value="OLFACTORYR"/>
</dbReference>
<dbReference type="SUPFAM" id="SSF81321">
    <property type="entry name" value="Family A G protein-coupled receptor-like"/>
    <property type="match status" value="1"/>
</dbReference>
<dbReference type="PROSITE" id="PS50262">
    <property type="entry name" value="G_PROTEIN_RECEP_F1_2"/>
    <property type="match status" value="1"/>
</dbReference>
<evidence type="ECO:0000255" key="1"/>
<evidence type="ECO:0000255" key="2">
    <source>
        <dbReference type="PROSITE-ProRule" id="PRU00521"/>
    </source>
</evidence>
<evidence type="ECO:0000305" key="3"/>
<proteinExistence type="inferred from homology"/>
<gene>
    <name type="primary">OR8K3</name>
</gene>
<organism>
    <name type="scientific">Homo sapiens</name>
    <name type="common">Human</name>
    <dbReference type="NCBI Taxonomy" id="9606"/>
    <lineage>
        <taxon>Eukaryota</taxon>
        <taxon>Metazoa</taxon>
        <taxon>Chordata</taxon>
        <taxon>Craniata</taxon>
        <taxon>Vertebrata</taxon>
        <taxon>Euteleostomi</taxon>
        <taxon>Mammalia</taxon>
        <taxon>Eutheria</taxon>
        <taxon>Euarchontoglires</taxon>
        <taxon>Primates</taxon>
        <taxon>Haplorrhini</taxon>
        <taxon>Catarrhini</taxon>
        <taxon>Hominidae</taxon>
        <taxon>Homo</taxon>
    </lineage>
</organism>
<sequence length="312" mass="35463">MEQHNLTTVNEFILTGITDIAELQAPLFALFLMIYVISVMGNLGMIVLTKLDSRLQTPMYFFLRHLAFMDLGYSTTVGPKMLVNFVVDKNIISYYFCATQLAFFLVFIGSELFILSAMSYDLYVAICNPLLYTVIMSRRVCQVLVAIPYLYCTFISLLVTIKIFTLSFCGYNVISHFYCDSLPLLPLLCSNTHEIELIILIFAAIDLISSLLIVLLSYLLILVAILRMNSAGRQKAFSTCGAHLTVVIVFYGTLLFMYVQPKSSHSFDTDKVASIFYTLVIPMLNPLIYSLRNKDVKYALRRTWNNLCNIFV</sequence>
<keyword id="KW-1003">Cell membrane</keyword>
<keyword id="KW-1015">Disulfide bond</keyword>
<keyword id="KW-0297">G-protein coupled receptor</keyword>
<keyword id="KW-0325">Glycoprotein</keyword>
<keyword id="KW-0472">Membrane</keyword>
<keyword id="KW-0552">Olfaction</keyword>
<keyword id="KW-0675">Receptor</keyword>
<keyword id="KW-1185">Reference proteome</keyword>
<keyword id="KW-0716">Sensory transduction</keyword>
<keyword id="KW-0807">Transducer</keyword>
<keyword id="KW-0812">Transmembrane</keyword>
<keyword id="KW-1133">Transmembrane helix</keyword>
<reference key="1">
    <citation type="submission" date="2001-07" db="EMBL/GenBank/DDBJ databases">
        <title>Genome-wide discovery and analysis of human seven transmembrane helix receptor genes.</title>
        <authorList>
            <person name="Suwa M."/>
            <person name="Sato T."/>
            <person name="Okouchi I."/>
            <person name="Arita M."/>
            <person name="Futami K."/>
            <person name="Matsumoto S."/>
            <person name="Tsutsumi S."/>
            <person name="Aburatani H."/>
            <person name="Asai K."/>
            <person name="Akiyama Y."/>
        </authorList>
    </citation>
    <scope>NUCLEOTIDE SEQUENCE [GENOMIC DNA]</scope>
</reference>
<reference key="2">
    <citation type="journal article" date="2004" name="Proc. Natl. Acad. Sci. U.S.A.">
        <title>The human olfactory receptor gene family.</title>
        <authorList>
            <person name="Malnic B."/>
            <person name="Godfrey P.A."/>
            <person name="Buck L.B."/>
        </authorList>
    </citation>
    <scope>IDENTIFICATION</scope>
</reference>
<reference key="3">
    <citation type="journal article" date="2004" name="Proc. Natl. Acad. Sci. U.S.A.">
        <authorList>
            <person name="Malnic B."/>
            <person name="Godfrey P.A."/>
            <person name="Buck L.B."/>
        </authorList>
    </citation>
    <scope>ERRATUM OF PUBMED:14983052</scope>
</reference>
<protein>
    <recommendedName>
        <fullName>Olfactory receptor 8K3</fullName>
    </recommendedName>
    <alternativeName>
        <fullName>Olfactory receptor OR11-181</fullName>
    </alternativeName>
</protein>